<reference evidence="9" key="1">
    <citation type="journal article" date="1998" name="Science">
        <title>Genome sequence of the nematode C. elegans: a platform for investigating biology.</title>
        <authorList>
            <consortium name="The C. elegans sequencing consortium"/>
        </authorList>
    </citation>
    <scope>NUCLEOTIDE SEQUENCE [LARGE SCALE GENOMIC DNA]</scope>
    <source>
        <strain evidence="9">Bristol N2</strain>
    </source>
</reference>
<reference evidence="7" key="2">
    <citation type="journal article" date="2012" name="Genes Cells">
        <title>A novel and conserved protein AHO-3 is required for thermotactic plasticity associated with feeding states in Caenorhabditis elegans.</title>
        <authorList>
            <person name="Nishio N."/>
            <person name="Mohri-Shiomi A."/>
            <person name="Nishida Y."/>
            <person name="Hiramatsu N."/>
            <person name="Kodama-Namba E."/>
            <person name="Kimura K.D."/>
            <person name="Kuhara A."/>
            <person name="Mori I."/>
        </authorList>
    </citation>
    <scope>FUNCTION</scope>
    <scope>SUBCELLULAR LOCATION</scope>
    <scope>TISSUE SPECIFICITY</scope>
    <scope>DEVELOPMENTAL STAGE</scope>
    <scope>MUTAGENESIS OF CYS-34; CYS-35; LEU-36; CYS-38; CYS-39; SER-191; ASP-256 AND HIS-285</scope>
</reference>
<name>AHO3_CAEEL</name>
<protein>
    <recommendedName>
        <fullName evidence="7">Alpha/beta hydrolase domain-containing protein aho-3</fullName>
        <ecNumber evidence="3">3.1.2.22</ecNumber>
    </recommendedName>
    <alternativeName>
        <fullName evidence="10">Abnormal hunger orientation protein 3</fullName>
    </alternativeName>
</protein>
<organism evidence="9">
    <name type="scientific">Caenorhabditis elegans</name>
    <dbReference type="NCBI Taxonomy" id="6239"/>
    <lineage>
        <taxon>Eukaryota</taxon>
        <taxon>Metazoa</taxon>
        <taxon>Ecdysozoa</taxon>
        <taxon>Nematoda</taxon>
        <taxon>Chromadorea</taxon>
        <taxon>Rhabditida</taxon>
        <taxon>Rhabditina</taxon>
        <taxon>Rhabditomorpha</taxon>
        <taxon>Rhabditoidea</taxon>
        <taxon>Rhabditidae</taxon>
        <taxon>Peloderinae</taxon>
        <taxon>Caenorhabditis</taxon>
    </lineage>
</organism>
<feature type="chain" id="PRO_0000443110" description="Alpha/beta hydrolase domain-containing protein aho-3">
    <location>
        <begin position="1"/>
        <end position="332"/>
    </location>
</feature>
<feature type="region of interest" description="Disordered" evidence="5">
    <location>
        <begin position="1"/>
        <end position="24"/>
    </location>
</feature>
<feature type="compositionally biased region" description="Low complexity" evidence="5">
    <location>
        <begin position="1"/>
        <end position="15"/>
    </location>
</feature>
<feature type="active site" description="Charge relay system" evidence="4">
    <location>
        <position position="191"/>
    </location>
</feature>
<feature type="active site" description="Charge relay system" evidence="1">
    <location>
        <position position="256"/>
    </location>
</feature>
<feature type="active site" description="Charge relay system" evidence="1">
    <location>
        <position position="285"/>
    </location>
</feature>
<feature type="mutagenesis site" description="No defect in starvation-induced thermotaxis plasticity. Impaired starvation-induced thermotaxis plasticity and loss of localization to neuronal sensory endings, when associated with S-35; S-38 and S-39." evidence="6">
    <original>C</original>
    <variation>S</variation>
    <location>
        <position position="34"/>
    </location>
</feature>
<feature type="mutagenesis site" description="No defect in starvation-induced thermotaxis plasticity. Impaired starvation-induced thermotaxis plasticity, when associated with S-34; S-38 and S-39 or S-36; S-38 and S-39. Loss of localization to neuronal sensory endings, when associated with S-34; S-38 and S-39." evidence="6">
    <original>C</original>
    <variation>S</variation>
    <location>
        <position position="35"/>
    </location>
</feature>
<feature type="mutagenesis site" description="No defect in starvation-induced thermotaxis plasticity. Impaired starvation-induced thermotaxis plasticity, when associated with S-35; S-38 and S-39." evidence="6">
    <original>L</original>
    <variation>S</variation>
    <location>
        <position position="36"/>
    </location>
</feature>
<feature type="mutagenesis site" description="No defect in starvation-induced thermotaxis plasticity. Impaired starvation-induced thermotaxis plasticity, when associated with S-34; S-35 and S-39 or S-35; S-36 and S-39. Loss of localization to neuronal sensory endings, when associated with S-34; S-35 and S-39." evidence="6">
    <original>C</original>
    <variation>S</variation>
    <location>
        <position position="38"/>
    </location>
</feature>
<feature type="mutagenesis site" description="No defect in starvation-induced thermotaxis plasticity. Impaired starvation-induced thermotaxis plasticity, when associated with S-34; S-35 and S-38 or S-35; S-36 and S-38. Loss of localization to neuronal sensory endings, when associated with S-34; S-35 and S-38." evidence="6">
    <original>C</original>
    <variation>S</variation>
    <location>
        <position position="39"/>
    </location>
</feature>
<feature type="mutagenesis site" description="Impaired starvation-induced thermotaxis plasticity." evidence="6">
    <original>S</original>
    <variation>A</variation>
    <location>
        <position position="191"/>
    </location>
</feature>
<feature type="mutagenesis site" description="Impaired starvation-induced thermotaxis plasticity." evidence="6">
    <original>D</original>
    <variation>N</variation>
    <location>
        <position position="256"/>
    </location>
</feature>
<feature type="mutagenesis site" description="Impaired starvation-induced thermotaxis plasticity." evidence="6">
    <original>H</original>
    <variation>A</variation>
    <location>
        <position position="285"/>
    </location>
</feature>
<accession>Q21221</accession>
<sequence length="332" mass="35999">MSSGAPSGSSMSSTPGSPPPRAGGPNSVSFKDLCCLFCCPPFPSSIVSKLAFMPPEPSYTITEDNKLVLIEGRAAWPHQEVDMANCVEMRITRTRRRNRVACTMIRPLPNSHFTLLFSHGNAVDLGQMTSFLYGLGFHLNCNVFSYDYSGYGCSTGKPSEKNLYADITAAFELLKSEFGVPKEKIILYGQSIGTVPSVDLASREDLAALVLHSPLMSGMRVAFPGTTTTWCCDAFPSIEKVPRVKCPTLVIHGTDDEVIDFSHGVSIYERCPTSVEPLWVPGAGHNDVELHAAYLERLRSFIDMEASAIRVTAPITNATSTNSRTISNGTSS</sequence>
<evidence type="ECO:0000250" key="1">
    <source>
        <dbReference type="UniProtKB" id="O75608"/>
    </source>
</evidence>
<evidence type="ECO:0000250" key="2">
    <source>
        <dbReference type="UniProtKB" id="Q7M759"/>
    </source>
</evidence>
<evidence type="ECO:0000250" key="3">
    <source>
        <dbReference type="UniProtKB" id="Q8VCV1"/>
    </source>
</evidence>
<evidence type="ECO:0000250" key="4">
    <source>
        <dbReference type="UniProtKB" id="Q99685"/>
    </source>
</evidence>
<evidence type="ECO:0000256" key="5">
    <source>
        <dbReference type="SAM" id="MobiDB-lite"/>
    </source>
</evidence>
<evidence type="ECO:0000269" key="6">
    <source>
    </source>
</evidence>
<evidence type="ECO:0000305" key="7"/>
<evidence type="ECO:0000305" key="8">
    <source>
    </source>
</evidence>
<evidence type="ECO:0000312" key="9">
    <source>
        <dbReference type="Proteomes" id="UP000001940"/>
    </source>
</evidence>
<evidence type="ECO:0000312" key="10">
    <source>
        <dbReference type="WormBase" id="K04G2.2"/>
    </source>
</evidence>
<keyword id="KW-1003">Cell membrane</keyword>
<keyword id="KW-0968">Cytoplasmic vesicle</keyword>
<keyword id="KW-0378">Hydrolase</keyword>
<keyword id="KW-0449">Lipoprotein</keyword>
<keyword id="KW-0472">Membrane</keyword>
<keyword id="KW-0564">Palmitate</keyword>
<keyword id="KW-1185">Reference proteome</keyword>
<gene>
    <name evidence="10" type="primary">aho-3</name>
    <name evidence="10" type="ORF">K04G2.2</name>
</gene>
<comment type="function">
    <text evidence="3 6">Hydrolyzes fatty acids from S-acylated cysteine residues in proteins (By similarity). Acts in sensory neurons including AWC to regulate starvation-induced thermotaxis plasticity and salt learning behavior.</text>
</comment>
<comment type="catalytic activity">
    <reaction evidence="3">
        <text>S-hexadecanoyl-L-cysteinyl-[protein] + H2O = L-cysteinyl-[protein] + hexadecanoate + H(+)</text>
        <dbReference type="Rhea" id="RHEA:19233"/>
        <dbReference type="Rhea" id="RHEA-COMP:10131"/>
        <dbReference type="Rhea" id="RHEA-COMP:11032"/>
        <dbReference type="ChEBI" id="CHEBI:7896"/>
        <dbReference type="ChEBI" id="CHEBI:15377"/>
        <dbReference type="ChEBI" id="CHEBI:15378"/>
        <dbReference type="ChEBI" id="CHEBI:29950"/>
        <dbReference type="ChEBI" id="CHEBI:74151"/>
        <dbReference type="EC" id="3.1.2.22"/>
    </reaction>
</comment>
<comment type="subcellular location">
    <subcellularLocation>
        <location evidence="8">Cell membrane</location>
        <topology evidence="2">Lipid-anchor</topology>
        <orientation evidence="8">Cytoplasmic side</orientation>
    </subcellularLocation>
    <subcellularLocation>
        <location evidence="8">Cytoplasmic vesicle membrane</location>
        <topology evidence="2">Lipid-anchor</topology>
        <orientation evidence="8">Cytoplasmic side</orientation>
    </subcellularLocation>
    <text evidence="6">In neurons, localizes to the sensory endings and to cytoplasmic punctate structures.</text>
</comment>
<comment type="tissue specificity">
    <text evidence="6">Expressed in a subset of neurons including AIY, HSN, ADF, AFD, AWC, AWB and NSM, hypodermis, pharyngeal muscle and intestine.</text>
</comment>
<comment type="developmental stage">
    <text evidence="6">Expressed in larvae and adults.</text>
</comment>
<comment type="PTM">
    <text evidence="8">Palmitoylated on cysteine residues located in a cysteine cluster at the N-terminus which promotes membrane localization and localization to sensory neuron endings.</text>
</comment>
<comment type="similarity">
    <text evidence="7">Belongs to the AB hydrolase superfamily. ABHD17 family.</text>
</comment>
<proteinExistence type="evidence at protein level"/>
<dbReference type="EC" id="3.1.2.22" evidence="3"/>
<dbReference type="EMBL" id="BX284601">
    <property type="protein sequence ID" value="CAB00039.2"/>
    <property type="molecule type" value="Genomic_DNA"/>
</dbReference>
<dbReference type="PIR" id="T23321">
    <property type="entry name" value="T23321"/>
</dbReference>
<dbReference type="RefSeq" id="NP_492210.2">
    <property type="nucleotide sequence ID" value="NM_059809.8"/>
</dbReference>
<dbReference type="SMR" id="Q21221"/>
<dbReference type="FunCoup" id="Q21221">
    <property type="interactions" value="2153"/>
</dbReference>
<dbReference type="STRING" id="6239.K04G2.2.1"/>
<dbReference type="ESTHER" id="caeel-K04G2.2">
    <property type="family name" value="ABHD17-depalmitoylase"/>
</dbReference>
<dbReference type="MEROPS" id="S09.A81"/>
<dbReference type="PaxDb" id="6239-K04G2.2"/>
<dbReference type="PeptideAtlas" id="Q21221"/>
<dbReference type="EnsemblMetazoa" id="K04G2.2.1">
    <property type="protein sequence ID" value="K04G2.2.1"/>
    <property type="gene ID" value="WBGene00045192"/>
</dbReference>
<dbReference type="GeneID" id="172585"/>
<dbReference type="KEGG" id="cel:CELE_K04G2.2"/>
<dbReference type="UCSC" id="K04G2.2">
    <property type="organism name" value="c. elegans"/>
</dbReference>
<dbReference type="AGR" id="WB:WBGene00045192"/>
<dbReference type="CTD" id="172585"/>
<dbReference type="WormBase" id="K04G2.2">
    <property type="protein sequence ID" value="CE37533"/>
    <property type="gene ID" value="WBGene00045192"/>
    <property type="gene designation" value="aho-3"/>
</dbReference>
<dbReference type="eggNOG" id="KOG1552">
    <property type="taxonomic scope" value="Eukaryota"/>
</dbReference>
<dbReference type="GeneTree" id="ENSGT00940000155854"/>
<dbReference type="HOGENOM" id="CLU_029375_5_4_1"/>
<dbReference type="InParanoid" id="Q21221"/>
<dbReference type="OMA" id="QMCSFYY"/>
<dbReference type="OrthoDB" id="446723at2759"/>
<dbReference type="PhylomeDB" id="Q21221"/>
<dbReference type="Reactome" id="R-CEL-9648002">
    <property type="pathway name" value="RAS processing"/>
</dbReference>
<dbReference type="PRO" id="PR:Q21221"/>
<dbReference type="Proteomes" id="UP000001940">
    <property type="component" value="Chromosome I"/>
</dbReference>
<dbReference type="Bgee" id="WBGene00045192">
    <property type="expression patterns" value="Expressed in germ line (C elegans) and 4 other cell types or tissues"/>
</dbReference>
<dbReference type="GO" id="GO:0005737">
    <property type="term" value="C:cytoplasm"/>
    <property type="evidence" value="ECO:0000314"/>
    <property type="project" value="UniProtKB"/>
</dbReference>
<dbReference type="GO" id="GO:0031410">
    <property type="term" value="C:cytoplasmic vesicle"/>
    <property type="evidence" value="ECO:0000314"/>
    <property type="project" value="UniProtKB"/>
</dbReference>
<dbReference type="GO" id="GO:0010008">
    <property type="term" value="C:endosome membrane"/>
    <property type="evidence" value="ECO:0000318"/>
    <property type="project" value="GO_Central"/>
</dbReference>
<dbReference type="GO" id="GO:0005886">
    <property type="term" value="C:plasma membrane"/>
    <property type="evidence" value="ECO:0000318"/>
    <property type="project" value="GO_Central"/>
</dbReference>
<dbReference type="GO" id="GO:0071683">
    <property type="term" value="C:sensory dendrite"/>
    <property type="evidence" value="ECO:0000314"/>
    <property type="project" value="UniProtKB"/>
</dbReference>
<dbReference type="GO" id="GO:0008474">
    <property type="term" value="F:palmitoyl-(protein) hydrolase activity"/>
    <property type="evidence" value="ECO:0000318"/>
    <property type="project" value="GO_Central"/>
</dbReference>
<dbReference type="GO" id="GO:0008306">
    <property type="term" value="P:associative learning"/>
    <property type="evidence" value="ECO:0000315"/>
    <property type="project" value="UniProtKB"/>
</dbReference>
<dbReference type="GO" id="GO:0042595">
    <property type="term" value="P:behavioral response to starvation"/>
    <property type="evidence" value="ECO:0000315"/>
    <property type="project" value="UniProtKB"/>
</dbReference>
<dbReference type="FunFam" id="3.40.50.1820:FF:000008">
    <property type="entry name" value="Alpha/beta hydrolase domain-containing protein 17B"/>
    <property type="match status" value="1"/>
</dbReference>
<dbReference type="Gene3D" id="3.40.50.1820">
    <property type="entry name" value="alpha/beta hydrolase"/>
    <property type="match status" value="1"/>
</dbReference>
<dbReference type="InterPro" id="IPR029058">
    <property type="entry name" value="AB_hydrolase_fold"/>
</dbReference>
<dbReference type="InterPro" id="IPR022742">
    <property type="entry name" value="Hydrolase_4"/>
</dbReference>
<dbReference type="PANTHER" id="PTHR12277">
    <property type="entry name" value="ALPHA/BETA HYDROLASE DOMAIN-CONTAINING PROTEIN"/>
    <property type="match status" value="1"/>
</dbReference>
<dbReference type="PANTHER" id="PTHR12277:SF81">
    <property type="entry name" value="PROTEIN ABHD13"/>
    <property type="match status" value="1"/>
</dbReference>
<dbReference type="Pfam" id="PF12146">
    <property type="entry name" value="Hydrolase_4"/>
    <property type="match status" value="1"/>
</dbReference>
<dbReference type="SUPFAM" id="SSF53474">
    <property type="entry name" value="alpha/beta-Hydrolases"/>
    <property type="match status" value="1"/>
</dbReference>